<feature type="initiator methionine" description="Removed" evidence="10">
    <location>
        <position position="1"/>
    </location>
</feature>
<feature type="chain" id="PRO_0000210220" description="Syntaxin-10">
    <location>
        <begin position="2"/>
        <end position="249"/>
    </location>
</feature>
<feature type="topological domain" description="Cytoplasmic" evidence="1">
    <location>
        <begin position="2"/>
        <end position="228"/>
    </location>
</feature>
<feature type="transmembrane region" description="Helical; Anchor for type IV membrane protein" evidence="1">
    <location>
        <begin position="229"/>
        <end position="249"/>
    </location>
</feature>
<feature type="domain" description="t-SNARE coiled-coil homology" evidence="2">
    <location>
        <begin position="157"/>
        <end position="219"/>
    </location>
</feature>
<feature type="coiled-coil region" evidence="1">
    <location>
        <begin position="41"/>
        <end position="69"/>
    </location>
</feature>
<feature type="modified residue" description="N-acetylserine" evidence="10">
    <location>
        <position position="2"/>
    </location>
</feature>
<feature type="modified residue" description="Phosphoserine" evidence="9 11">
    <location>
        <position position="108"/>
    </location>
</feature>
<feature type="modified residue" description="Phosphothreonine" evidence="9">
    <location>
        <position position="110"/>
    </location>
</feature>
<feature type="modified residue" description="Phosphoserine" evidence="8 11">
    <location>
        <position position="134"/>
    </location>
</feature>
<feature type="modified residue" description="Phosphoserine" evidence="7 8 11">
    <location>
        <position position="140"/>
    </location>
</feature>
<feature type="modified residue" description="Phosphoserine" evidence="7 8 11">
    <location>
        <position position="143"/>
    </location>
</feature>
<feature type="splice variant" id="VSP_006347" description="In isoform 2." evidence="5">
    <location>
        <begin position="76"/>
        <end position="124"/>
    </location>
</feature>
<feature type="helix" evidence="12">
    <location>
        <begin position="7"/>
        <end position="30"/>
    </location>
</feature>
<feature type="helix" evidence="12">
    <location>
        <begin position="42"/>
        <end position="73"/>
    </location>
</feature>
<feature type="helix" evidence="12">
    <location>
        <begin position="75"/>
        <end position="78"/>
    </location>
</feature>
<feature type="helix" evidence="12">
    <location>
        <begin position="82"/>
        <end position="106"/>
    </location>
</feature>
<sequence length="249" mass="28114">MSLEDPFFVVRGEVQKAVNTARGLYQRWCELLQESAAVGREELDWTTNELRNGLRSIEWDLEDLEETIGIVEANPGKFKLPAGDLQERKVFVERMREAVQEMKDHMVSPTAVAFLERNNREILAGKPAAQKSPSDLLDASAVSATSRYIEEQQATQQLIMDEQDQQLEMVSGSIQVLKHMSGRVGEELDEQGIMLDAFAQEMDHTQSRMDGVLRKLAKVSHMTSDRRQWCAIAVLVGVLLLVLILLFSL</sequence>
<accession>O60499</accession>
<accession>A6NC41</accession>
<accession>Q6IAP4</accession>
<accession>Q96AE8</accession>
<reference key="1">
    <citation type="journal article" date="1998" name="Biochem. Biophys. Res. Commun.">
        <title>Syntaxin 10: a member of the syntaxin family localized to the trans-Golgi network.</title>
        <authorList>
            <person name="Tang B.L."/>
            <person name="Low D.Y.H."/>
            <person name="Tan A.E.H."/>
            <person name="Hong W."/>
        </authorList>
    </citation>
    <scope>NUCLEOTIDE SEQUENCE [MRNA] (ISOFORM 1)</scope>
</reference>
<reference key="2">
    <citation type="submission" date="2004-06" db="EMBL/GenBank/DDBJ databases">
        <title>Cloning of human full open reading frames in Gateway(TM) system entry vector (pDONR201).</title>
        <authorList>
            <person name="Ebert L."/>
            <person name="Schick M."/>
            <person name="Neubert P."/>
            <person name="Schatten R."/>
            <person name="Henze S."/>
            <person name="Korn B."/>
        </authorList>
    </citation>
    <scope>NUCLEOTIDE SEQUENCE [LARGE SCALE MRNA] (ISOFORM 1)</scope>
</reference>
<reference key="3">
    <citation type="journal article" date="2004" name="Nature">
        <title>The DNA sequence and biology of human chromosome 19.</title>
        <authorList>
            <person name="Grimwood J."/>
            <person name="Gordon L.A."/>
            <person name="Olsen A.S."/>
            <person name="Terry A."/>
            <person name="Schmutz J."/>
            <person name="Lamerdin J.E."/>
            <person name="Hellsten U."/>
            <person name="Goodstein D."/>
            <person name="Couronne O."/>
            <person name="Tran-Gyamfi M."/>
            <person name="Aerts A."/>
            <person name="Altherr M."/>
            <person name="Ashworth L."/>
            <person name="Bajorek E."/>
            <person name="Black S."/>
            <person name="Branscomb E."/>
            <person name="Caenepeel S."/>
            <person name="Carrano A.V."/>
            <person name="Caoile C."/>
            <person name="Chan Y.M."/>
            <person name="Christensen M."/>
            <person name="Cleland C.A."/>
            <person name="Copeland A."/>
            <person name="Dalin E."/>
            <person name="Dehal P."/>
            <person name="Denys M."/>
            <person name="Detter J.C."/>
            <person name="Escobar J."/>
            <person name="Flowers D."/>
            <person name="Fotopulos D."/>
            <person name="Garcia C."/>
            <person name="Georgescu A.M."/>
            <person name="Glavina T."/>
            <person name="Gomez M."/>
            <person name="Gonzales E."/>
            <person name="Groza M."/>
            <person name="Hammon N."/>
            <person name="Hawkins T."/>
            <person name="Haydu L."/>
            <person name="Ho I."/>
            <person name="Huang W."/>
            <person name="Israni S."/>
            <person name="Jett J."/>
            <person name="Kadner K."/>
            <person name="Kimball H."/>
            <person name="Kobayashi A."/>
            <person name="Larionov V."/>
            <person name="Leem S.-H."/>
            <person name="Lopez F."/>
            <person name="Lou Y."/>
            <person name="Lowry S."/>
            <person name="Malfatti S."/>
            <person name="Martinez D."/>
            <person name="McCready P.M."/>
            <person name="Medina C."/>
            <person name="Morgan J."/>
            <person name="Nelson K."/>
            <person name="Nolan M."/>
            <person name="Ovcharenko I."/>
            <person name="Pitluck S."/>
            <person name="Pollard M."/>
            <person name="Popkie A.P."/>
            <person name="Predki P."/>
            <person name="Quan G."/>
            <person name="Ramirez L."/>
            <person name="Rash S."/>
            <person name="Retterer J."/>
            <person name="Rodriguez A."/>
            <person name="Rogers S."/>
            <person name="Salamov A."/>
            <person name="Salazar A."/>
            <person name="She X."/>
            <person name="Smith D."/>
            <person name="Slezak T."/>
            <person name="Solovyev V."/>
            <person name="Thayer N."/>
            <person name="Tice H."/>
            <person name="Tsai M."/>
            <person name="Ustaszewska A."/>
            <person name="Vo N."/>
            <person name="Wagner M."/>
            <person name="Wheeler J."/>
            <person name="Wu K."/>
            <person name="Xie G."/>
            <person name="Yang J."/>
            <person name="Dubchak I."/>
            <person name="Furey T.S."/>
            <person name="DeJong P."/>
            <person name="Dickson M."/>
            <person name="Gordon D."/>
            <person name="Eichler E.E."/>
            <person name="Pennacchio L.A."/>
            <person name="Richardson P."/>
            <person name="Stubbs L."/>
            <person name="Rokhsar D.S."/>
            <person name="Myers R.M."/>
            <person name="Rubin E.M."/>
            <person name="Lucas S.M."/>
        </authorList>
    </citation>
    <scope>NUCLEOTIDE SEQUENCE [LARGE SCALE GENOMIC DNA]</scope>
</reference>
<reference key="4">
    <citation type="journal article" date="2004" name="Genome Res.">
        <title>The status, quality, and expansion of the NIH full-length cDNA project: the Mammalian Gene Collection (MGC).</title>
        <authorList>
            <consortium name="The MGC Project Team"/>
        </authorList>
    </citation>
    <scope>NUCLEOTIDE SEQUENCE [LARGE SCALE MRNA] (ISOFORM 2)</scope>
    <source>
        <tissue>Brain</tissue>
    </source>
</reference>
<reference key="5">
    <citation type="journal article" date="2005" name="Exp. Cell Res.">
        <title>Characterization of the human GARP (Golgi associated retrograde protein) complex.</title>
        <authorList>
            <person name="Liewen H."/>
            <person name="Meinhold-Heerlein I."/>
            <person name="Oliveira V."/>
            <person name="Schwarzenbacher R."/>
            <person name="Luo G."/>
            <person name="Wadle A."/>
            <person name="Jung M."/>
            <person name="Pfreundschuh M."/>
            <person name="Stenner-Liewen F."/>
        </authorList>
    </citation>
    <scope>INTERACTION WITH VSP52</scope>
</reference>
<reference key="6">
    <citation type="journal article" date="2008" name="J. Cell Biol.">
        <title>A syntaxin 10-SNARE complex distinguishes two distinct transport routes from endosomes to the trans-Golgi in human cells.</title>
        <authorList>
            <person name="Ganley I.G."/>
            <person name="Espinosa E."/>
            <person name="Pfeffer S.R."/>
        </authorList>
    </citation>
    <scope>FUNCTION</scope>
</reference>
<reference key="7">
    <citation type="journal article" date="2008" name="Mol. Cell">
        <title>Kinase-selective enrichment enables quantitative phosphoproteomics of the kinome across the cell cycle.</title>
        <authorList>
            <person name="Daub H."/>
            <person name="Olsen J.V."/>
            <person name="Bairlein M."/>
            <person name="Gnad F."/>
            <person name="Oppermann F.S."/>
            <person name="Korner R."/>
            <person name="Greff Z."/>
            <person name="Keri G."/>
            <person name="Stemmann O."/>
            <person name="Mann M."/>
        </authorList>
    </citation>
    <scope>IDENTIFICATION BY MASS SPECTROMETRY [LARGE SCALE ANALYSIS]</scope>
    <source>
        <tissue>Cervix carcinoma</tissue>
    </source>
</reference>
<reference key="8">
    <citation type="journal article" date="2008" name="Proc. Natl. Acad. Sci. U.S.A.">
        <title>A quantitative atlas of mitotic phosphorylation.</title>
        <authorList>
            <person name="Dephoure N."/>
            <person name="Zhou C."/>
            <person name="Villen J."/>
            <person name="Beausoleil S.A."/>
            <person name="Bakalarski C.E."/>
            <person name="Elledge S.J."/>
            <person name="Gygi S.P."/>
        </authorList>
    </citation>
    <scope>PHOSPHORYLATION [LARGE SCALE ANALYSIS] AT SER-140 AND SER-143</scope>
    <scope>IDENTIFICATION BY MASS SPECTROMETRY [LARGE SCALE ANALYSIS]</scope>
    <source>
        <tissue>Cervix carcinoma</tissue>
    </source>
</reference>
<reference key="9">
    <citation type="journal article" date="2009" name="Sci. Signal.">
        <title>Quantitative phosphoproteomic analysis of T cell receptor signaling reveals system-wide modulation of protein-protein interactions.</title>
        <authorList>
            <person name="Mayya V."/>
            <person name="Lundgren D.H."/>
            <person name="Hwang S.-I."/>
            <person name="Rezaul K."/>
            <person name="Wu L."/>
            <person name="Eng J.K."/>
            <person name="Rodionov V."/>
            <person name="Han D.K."/>
        </authorList>
    </citation>
    <scope>PHOSPHORYLATION [LARGE SCALE ANALYSIS] AT SER-134; SER-140 AND SER-143</scope>
    <scope>IDENTIFICATION BY MASS SPECTROMETRY [LARGE SCALE ANALYSIS]</scope>
    <source>
        <tissue>Leukemic T-cell</tissue>
    </source>
</reference>
<reference key="10">
    <citation type="journal article" date="2010" name="Sci. Signal.">
        <title>Quantitative phosphoproteomics reveals widespread full phosphorylation site occupancy during mitosis.</title>
        <authorList>
            <person name="Olsen J.V."/>
            <person name="Vermeulen M."/>
            <person name="Santamaria A."/>
            <person name="Kumar C."/>
            <person name="Miller M.L."/>
            <person name="Jensen L.J."/>
            <person name="Gnad F."/>
            <person name="Cox J."/>
            <person name="Jensen T.S."/>
            <person name="Nigg E.A."/>
            <person name="Brunak S."/>
            <person name="Mann M."/>
        </authorList>
    </citation>
    <scope>PHOSPHORYLATION [LARGE SCALE ANALYSIS] AT SER-108 AND THR-110</scope>
    <scope>IDENTIFICATION BY MASS SPECTROMETRY [LARGE SCALE ANALYSIS]</scope>
    <source>
        <tissue>Cervix carcinoma</tissue>
    </source>
</reference>
<reference key="11">
    <citation type="journal article" date="2011" name="BMC Syst. Biol.">
        <title>Initial characterization of the human central proteome.</title>
        <authorList>
            <person name="Burkard T.R."/>
            <person name="Planyavsky M."/>
            <person name="Kaupe I."/>
            <person name="Breitwieser F.P."/>
            <person name="Buerckstuemmer T."/>
            <person name="Bennett K.L."/>
            <person name="Superti-Furga G."/>
            <person name="Colinge J."/>
        </authorList>
    </citation>
    <scope>IDENTIFICATION BY MASS SPECTROMETRY [LARGE SCALE ANALYSIS]</scope>
</reference>
<reference key="12">
    <citation type="journal article" date="2012" name="Proc. Natl. Acad. Sci. U.S.A.">
        <title>N-terminal acetylome analyses and functional insights of the N-terminal acetyltransferase NatB.</title>
        <authorList>
            <person name="Van Damme P."/>
            <person name="Lasa M."/>
            <person name="Polevoda B."/>
            <person name="Gazquez C."/>
            <person name="Elosegui-Artola A."/>
            <person name="Kim D.S."/>
            <person name="De Juan-Pardo E."/>
            <person name="Demeyer K."/>
            <person name="Hole K."/>
            <person name="Larrea E."/>
            <person name="Timmerman E."/>
            <person name="Prieto J."/>
            <person name="Arnesen T."/>
            <person name="Sherman F."/>
            <person name="Gevaert K."/>
            <person name="Aldabe R."/>
        </authorList>
    </citation>
    <scope>ACETYLATION [LARGE SCALE ANALYSIS] AT SER-2</scope>
    <scope>CLEAVAGE OF INITIATOR METHIONINE [LARGE SCALE ANALYSIS]</scope>
    <scope>IDENTIFICATION BY MASS SPECTROMETRY [LARGE SCALE ANALYSIS]</scope>
</reference>
<reference key="13">
    <citation type="journal article" date="2013" name="J. Proteome Res.">
        <title>Toward a comprehensive characterization of a human cancer cell phosphoproteome.</title>
        <authorList>
            <person name="Zhou H."/>
            <person name="Di Palma S."/>
            <person name="Preisinger C."/>
            <person name="Peng M."/>
            <person name="Polat A.N."/>
            <person name="Heck A.J."/>
            <person name="Mohammed S."/>
        </authorList>
    </citation>
    <scope>PHOSPHORYLATION [LARGE SCALE ANALYSIS] AT SER-108; SER-134; SER-140 AND SER-143</scope>
    <scope>IDENTIFICATION BY MASS SPECTROMETRY [LARGE SCALE ANALYSIS]</scope>
    <source>
        <tissue>Cervix carcinoma</tissue>
        <tissue>Erythroleukemia</tissue>
    </source>
</reference>
<reference key="14">
    <citation type="journal article" date="2014" name="J. Proteomics">
        <title>An enzyme assisted RP-RPLC approach for in-depth analysis of human liver phosphoproteome.</title>
        <authorList>
            <person name="Bian Y."/>
            <person name="Song C."/>
            <person name="Cheng K."/>
            <person name="Dong M."/>
            <person name="Wang F."/>
            <person name="Huang J."/>
            <person name="Sun D."/>
            <person name="Wang L."/>
            <person name="Ye M."/>
            <person name="Zou H."/>
        </authorList>
    </citation>
    <scope>IDENTIFICATION BY MASS SPECTROMETRY [LARGE SCALE ANALYSIS]</scope>
    <source>
        <tissue>Liver</tissue>
    </source>
</reference>
<reference key="15">
    <citation type="journal article" date="2015" name="Proteomics">
        <title>N-terminome analysis of the human mitochondrial proteome.</title>
        <authorList>
            <person name="Vaca Jacome A.S."/>
            <person name="Rabilloud T."/>
            <person name="Schaeffer-Reiss C."/>
            <person name="Rompais M."/>
            <person name="Ayoub D."/>
            <person name="Lane L."/>
            <person name="Bairoch A."/>
            <person name="Van Dorsselaer A."/>
            <person name="Carapito C."/>
        </authorList>
    </citation>
    <scope>IDENTIFICATION BY MASS SPECTROMETRY [LARGE SCALE ANALYSIS]</scope>
</reference>
<organism>
    <name type="scientific">Homo sapiens</name>
    <name type="common">Human</name>
    <dbReference type="NCBI Taxonomy" id="9606"/>
    <lineage>
        <taxon>Eukaryota</taxon>
        <taxon>Metazoa</taxon>
        <taxon>Chordata</taxon>
        <taxon>Craniata</taxon>
        <taxon>Vertebrata</taxon>
        <taxon>Euteleostomi</taxon>
        <taxon>Mammalia</taxon>
        <taxon>Eutheria</taxon>
        <taxon>Euarchontoglires</taxon>
        <taxon>Primates</taxon>
        <taxon>Haplorrhini</taxon>
        <taxon>Catarrhini</taxon>
        <taxon>Hominidae</taxon>
        <taxon>Homo</taxon>
    </lineage>
</organism>
<evidence type="ECO:0000255" key="1"/>
<evidence type="ECO:0000255" key="2">
    <source>
        <dbReference type="PROSITE-ProRule" id="PRU00202"/>
    </source>
</evidence>
<evidence type="ECO:0000269" key="3">
    <source>
    </source>
</evidence>
<evidence type="ECO:0000269" key="4">
    <source>
    </source>
</evidence>
<evidence type="ECO:0000303" key="5">
    <source>
    </source>
</evidence>
<evidence type="ECO:0000305" key="6"/>
<evidence type="ECO:0007744" key="7">
    <source>
    </source>
</evidence>
<evidence type="ECO:0007744" key="8">
    <source>
    </source>
</evidence>
<evidence type="ECO:0007744" key="9">
    <source>
    </source>
</evidence>
<evidence type="ECO:0007744" key="10">
    <source>
    </source>
</evidence>
<evidence type="ECO:0007744" key="11">
    <source>
    </source>
</evidence>
<evidence type="ECO:0007829" key="12">
    <source>
        <dbReference type="PDB" id="4DND"/>
    </source>
</evidence>
<comment type="function">
    <text evidence="4">SNARE involved in vesicular transport from the late endosomes to the trans-Golgi network.</text>
</comment>
<comment type="subunit">
    <text evidence="3">Interacts with VPS52.</text>
</comment>
<comment type="interaction">
    <interactant intactId="EBI-16067850">
        <id>O60499-1</id>
    </interactant>
    <interactant intactId="EBI-16067837">
        <id>Q9UID3-1</id>
        <label>VPS51</label>
    </interactant>
    <organismsDiffer>false</organismsDiffer>
    <experiments>5</experiments>
</comment>
<comment type="interaction">
    <interactant intactId="EBI-12094584">
        <id>O60499-2</id>
    </interactant>
    <interactant intactId="EBI-745535">
        <id>Q8NI60</id>
        <label>COQ8A</label>
    </interactant>
    <organismsDiffer>false</organismsDiffer>
    <experiments>3</experiments>
</comment>
<comment type="interaction">
    <interactant intactId="EBI-12094584">
        <id>O60499-2</id>
    </interactant>
    <interactant intactId="EBI-12823659">
        <id>Q5JRM2</id>
        <label>CXorf66</label>
    </interactant>
    <organismsDiffer>false</organismsDiffer>
    <experiments>3</experiments>
</comment>
<comment type="interaction">
    <interactant intactId="EBI-12094584">
        <id>O60499-2</id>
    </interactant>
    <interactant intactId="EBI-712466">
        <id>Q16623</id>
        <label>STX1A</label>
    </interactant>
    <organismsDiffer>false</organismsDiffer>
    <experiments>3</experiments>
</comment>
<comment type="interaction">
    <interactant intactId="EBI-12094584">
        <id>O60499-2</id>
    </interactant>
    <interactant intactId="EBI-744942">
        <id>Q12846</id>
        <label>STX4</label>
    </interactant>
    <organismsDiffer>false</organismsDiffer>
    <experiments>3</experiments>
</comment>
<comment type="interaction">
    <interactant intactId="EBI-12094584">
        <id>O60499-2</id>
    </interactant>
    <interactant intactId="EBI-3922699">
        <id>Q96IK0</id>
        <label>TMEM101</label>
    </interactant>
    <organismsDiffer>false</organismsDiffer>
    <experiments>3</experiments>
</comment>
<comment type="subcellular location">
    <subcellularLocation>
        <location evidence="6">Golgi apparatus membrane</location>
        <topology evidence="6">Single-pass type IV membrane protein</topology>
    </subcellularLocation>
</comment>
<comment type="alternative products">
    <event type="alternative splicing"/>
    <isoform>
        <id>O60499-1</id>
        <name>1</name>
        <sequence type="displayed"/>
    </isoform>
    <isoform>
        <id>O60499-2</id>
        <name>2</name>
        <sequence type="described" ref="VSP_006347"/>
    </isoform>
</comment>
<comment type="tissue specificity">
    <text>Expressed at high levels in heart, skeletal muscle and pancreas.</text>
</comment>
<comment type="similarity">
    <text evidence="6">Belongs to the syntaxin family.</text>
</comment>
<keyword id="KW-0002">3D-structure</keyword>
<keyword id="KW-0007">Acetylation</keyword>
<keyword id="KW-0025">Alternative splicing</keyword>
<keyword id="KW-0175">Coiled coil</keyword>
<keyword id="KW-0333">Golgi apparatus</keyword>
<keyword id="KW-0472">Membrane</keyword>
<keyword id="KW-0597">Phosphoprotein</keyword>
<keyword id="KW-0653">Protein transport</keyword>
<keyword id="KW-1267">Proteomics identification</keyword>
<keyword id="KW-1185">Reference proteome</keyword>
<keyword id="KW-0812">Transmembrane</keyword>
<keyword id="KW-1133">Transmembrane helix</keyword>
<keyword id="KW-0813">Transport</keyword>
<name>STX10_HUMAN</name>
<dbReference type="EMBL" id="AF035531">
    <property type="protein sequence ID" value="AAC05087.1"/>
    <property type="molecule type" value="mRNA"/>
</dbReference>
<dbReference type="EMBL" id="CR457110">
    <property type="protein sequence ID" value="CAG33391.1"/>
    <property type="molecule type" value="mRNA"/>
</dbReference>
<dbReference type="EMBL" id="AC011446">
    <property type="status" value="NOT_ANNOTATED_CDS"/>
    <property type="molecule type" value="Genomic_DNA"/>
</dbReference>
<dbReference type="EMBL" id="BC017237">
    <property type="protein sequence ID" value="AAH17237.1"/>
    <property type="molecule type" value="mRNA"/>
</dbReference>
<dbReference type="CCDS" id="CCDS32922.1">
    <molecule id="O60499-1"/>
</dbReference>
<dbReference type="CCDS" id="CCDS62571.1">
    <molecule id="O60499-2"/>
</dbReference>
<dbReference type="PIR" id="JC5922">
    <property type="entry name" value="JC5922"/>
</dbReference>
<dbReference type="RefSeq" id="NP_001258540.1">
    <molecule id="O60499-2"/>
    <property type="nucleotide sequence ID" value="NM_001271611.2"/>
</dbReference>
<dbReference type="RefSeq" id="NP_003756.1">
    <molecule id="O60499-1"/>
    <property type="nucleotide sequence ID" value="NM_003765.3"/>
</dbReference>
<dbReference type="PDB" id="4DND">
    <property type="method" value="X-ray"/>
    <property type="resolution" value="1.40 A"/>
    <property type="chains" value="A=1-108"/>
</dbReference>
<dbReference type="PDBsum" id="4DND"/>
<dbReference type="SMR" id="O60499"/>
<dbReference type="BioGRID" id="114225">
    <property type="interactions" value="159"/>
</dbReference>
<dbReference type="DIP" id="DIP-60563N"/>
<dbReference type="FunCoup" id="O60499">
    <property type="interactions" value="1516"/>
</dbReference>
<dbReference type="IntAct" id="O60499">
    <property type="interactions" value="78"/>
</dbReference>
<dbReference type="MINT" id="O60499"/>
<dbReference type="STRING" id="9606.ENSP00000466298"/>
<dbReference type="iPTMnet" id="O60499"/>
<dbReference type="MetOSite" id="O60499"/>
<dbReference type="PhosphoSitePlus" id="O60499"/>
<dbReference type="SwissPalm" id="O60499"/>
<dbReference type="BioMuta" id="STX10"/>
<dbReference type="jPOST" id="O60499"/>
<dbReference type="MassIVE" id="O60499"/>
<dbReference type="PaxDb" id="9606-ENSP00000466298"/>
<dbReference type="PeptideAtlas" id="O60499"/>
<dbReference type="ProteomicsDB" id="49434">
    <molecule id="O60499-1"/>
</dbReference>
<dbReference type="ProteomicsDB" id="49435">
    <molecule id="O60499-2"/>
</dbReference>
<dbReference type="Pumba" id="O60499"/>
<dbReference type="TopDownProteomics" id="O60499-1">
    <molecule id="O60499-1"/>
</dbReference>
<dbReference type="Antibodypedia" id="43275">
    <property type="antibodies" value="155 antibodies from 20 providers"/>
</dbReference>
<dbReference type="DNASU" id="8677"/>
<dbReference type="Ensembl" id="ENST00000343587.9">
    <molecule id="O60499-2"/>
    <property type="protein sequence ID" value="ENSP00000339350.4"/>
    <property type="gene ID" value="ENSG00000104915.15"/>
</dbReference>
<dbReference type="Ensembl" id="ENST00000587230.6">
    <molecule id="O60499-1"/>
    <property type="protein sequence ID" value="ENSP00000466298.1"/>
    <property type="gene ID" value="ENSG00000104915.15"/>
</dbReference>
<dbReference type="GeneID" id="8677"/>
<dbReference type="KEGG" id="hsa:8677"/>
<dbReference type="MANE-Select" id="ENST00000587230.6">
    <property type="protein sequence ID" value="ENSP00000466298.1"/>
    <property type="RefSeq nucleotide sequence ID" value="NM_003765.3"/>
    <property type="RefSeq protein sequence ID" value="NP_003756.1"/>
</dbReference>
<dbReference type="UCSC" id="uc021upq.3">
    <molecule id="O60499-1"/>
    <property type="organism name" value="human"/>
</dbReference>
<dbReference type="AGR" id="HGNC:11428"/>
<dbReference type="CTD" id="8677"/>
<dbReference type="DisGeNET" id="8677"/>
<dbReference type="GeneCards" id="STX10"/>
<dbReference type="HGNC" id="HGNC:11428">
    <property type="gene designation" value="STX10"/>
</dbReference>
<dbReference type="HPA" id="ENSG00000104915">
    <property type="expression patterns" value="Low tissue specificity"/>
</dbReference>
<dbReference type="MIM" id="603765">
    <property type="type" value="gene"/>
</dbReference>
<dbReference type="neXtProt" id="NX_O60499"/>
<dbReference type="OpenTargets" id="ENSG00000104915"/>
<dbReference type="PharmGKB" id="PA36228"/>
<dbReference type="VEuPathDB" id="HostDB:ENSG00000104915"/>
<dbReference type="eggNOG" id="KOG3202">
    <property type="taxonomic scope" value="Eukaryota"/>
</dbReference>
<dbReference type="GeneTree" id="ENSGT00940000163101"/>
<dbReference type="HOGENOM" id="CLU_061883_1_0_1"/>
<dbReference type="InParanoid" id="O60499"/>
<dbReference type="OMA" id="ERASDCC"/>
<dbReference type="OrthoDB" id="546861at2759"/>
<dbReference type="PAN-GO" id="O60499">
    <property type="GO annotations" value="9 GO annotations based on evolutionary models"/>
</dbReference>
<dbReference type="PhylomeDB" id="O60499"/>
<dbReference type="PathwayCommons" id="O60499"/>
<dbReference type="Reactome" id="R-HSA-6811440">
    <property type="pathway name" value="Retrograde transport at the Trans-Golgi-Network"/>
</dbReference>
<dbReference type="SignaLink" id="O60499"/>
<dbReference type="SIGNOR" id="O60499"/>
<dbReference type="BioGRID-ORCS" id="8677">
    <property type="hits" value="18 hits in 1161 CRISPR screens"/>
</dbReference>
<dbReference type="ChiTaRS" id="STX10">
    <property type="organism name" value="human"/>
</dbReference>
<dbReference type="EvolutionaryTrace" id="O60499"/>
<dbReference type="GeneWiki" id="STX10"/>
<dbReference type="GenomeRNAi" id="8677"/>
<dbReference type="Pharos" id="O60499">
    <property type="development level" value="Tbio"/>
</dbReference>
<dbReference type="PRO" id="PR:O60499"/>
<dbReference type="Proteomes" id="UP000005640">
    <property type="component" value="Chromosome 19"/>
</dbReference>
<dbReference type="RNAct" id="O60499">
    <property type="molecule type" value="protein"/>
</dbReference>
<dbReference type="Bgee" id="ENSG00000104915">
    <property type="expression patterns" value="Expressed in monocyte and 198 other cell types or tissues"/>
</dbReference>
<dbReference type="ExpressionAtlas" id="O60499">
    <property type="expression patterns" value="baseline and differential"/>
</dbReference>
<dbReference type="GO" id="GO:0005829">
    <property type="term" value="C:cytosol"/>
    <property type="evidence" value="ECO:0007669"/>
    <property type="project" value="GOC"/>
</dbReference>
<dbReference type="GO" id="GO:0012505">
    <property type="term" value="C:endomembrane system"/>
    <property type="evidence" value="ECO:0000318"/>
    <property type="project" value="GO_Central"/>
</dbReference>
<dbReference type="GO" id="GO:0000139">
    <property type="term" value="C:Golgi membrane"/>
    <property type="evidence" value="ECO:0007669"/>
    <property type="project" value="UniProtKB-SubCell"/>
</dbReference>
<dbReference type="GO" id="GO:0048471">
    <property type="term" value="C:perinuclear region of cytoplasm"/>
    <property type="evidence" value="ECO:0000314"/>
    <property type="project" value="UniProtKB"/>
</dbReference>
<dbReference type="GO" id="GO:0031201">
    <property type="term" value="C:SNARE complex"/>
    <property type="evidence" value="ECO:0000318"/>
    <property type="project" value="GO_Central"/>
</dbReference>
<dbReference type="GO" id="GO:0030672">
    <property type="term" value="C:synaptic vesicle membrane"/>
    <property type="evidence" value="ECO:0000318"/>
    <property type="project" value="GO_Central"/>
</dbReference>
<dbReference type="GO" id="GO:0005802">
    <property type="term" value="C:trans-Golgi network"/>
    <property type="evidence" value="ECO:0000314"/>
    <property type="project" value="UniProtKB"/>
</dbReference>
<dbReference type="GO" id="GO:0032588">
    <property type="term" value="C:trans-Golgi network membrane"/>
    <property type="evidence" value="ECO:0000304"/>
    <property type="project" value="Reactome"/>
</dbReference>
<dbReference type="GO" id="GO:0031982">
    <property type="term" value="C:vesicle"/>
    <property type="evidence" value="ECO:0000314"/>
    <property type="project" value="UniProtKB"/>
</dbReference>
<dbReference type="GO" id="GO:0005484">
    <property type="term" value="F:SNAP receptor activity"/>
    <property type="evidence" value="ECO:0000318"/>
    <property type="project" value="GO_Central"/>
</dbReference>
<dbReference type="GO" id="GO:0000149">
    <property type="term" value="F:SNARE binding"/>
    <property type="evidence" value="ECO:0000318"/>
    <property type="project" value="GO_Central"/>
</dbReference>
<dbReference type="GO" id="GO:0019905">
    <property type="term" value="F:syntaxin binding"/>
    <property type="evidence" value="ECO:0000353"/>
    <property type="project" value="UniProtKB"/>
</dbReference>
<dbReference type="GO" id="GO:0048193">
    <property type="term" value="P:Golgi vesicle transport"/>
    <property type="evidence" value="ECO:0007669"/>
    <property type="project" value="InterPro"/>
</dbReference>
<dbReference type="GO" id="GO:0006886">
    <property type="term" value="P:intracellular protein transport"/>
    <property type="evidence" value="ECO:0000318"/>
    <property type="project" value="GO_Central"/>
</dbReference>
<dbReference type="GO" id="GO:0032880">
    <property type="term" value="P:regulation of protein localization"/>
    <property type="evidence" value="ECO:0000315"/>
    <property type="project" value="UniProtKB"/>
</dbReference>
<dbReference type="GO" id="GO:0042147">
    <property type="term" value="P:retrograde transport, endosome to Golgi"/>
    <property type="evidence" value="ECO:0000314"/>
    <property type="project" value="UniProtKB"/>
</dbReference>
<dbReference type="GO" id="GO:0048278">
    <property type="term" value="P:vesicle docking"/>
    <property type="evidence" value="ECO:0000318"/>
    <property type="project" value="GO_Central"/>
</dbReference>
<dbReference type="GO" id="GO:0006906">
    <property type="term" value="P:vesicle fusion"/>
    <property type="evidence" value="ECO:0000318"/>
    <property type="project" value="GO_Central"/>
</dbReference>
<dbReference type="CDD" id="cd21446">
    <property type="entry name" value="SNARE_NTD_STX10"/>
    <property type="match status" value="1"/>
</dbReference>
<dbReference type="CDD" id="cd15851">
    <property type="entry name" value="SNARE_Syntaxin6"/>
    <property type="match status" value="1"/>
</dbReference>
<dbReference type="FunFam" id="1.20.5.110:FF:000006">
    <property type="entry name" value="Syntaxin 6"/>
    <property type="match status" value="1"/>
</dbReference>
<dbReference type="FunFam" id="1.20.58.90:FF:000002">
    <property type="entry name" value="syntaxin-6 isoform X1"/>
    <property type="match status" value="1"/>
</dbReference>
<dbReference type="Gene3D" id="1.20.5.110">
    <property type="match status" value="1"/>
</dbReference>
<dbReference type="Gene3D" id="1.20.58.90">
    <property type="match status" value="1"/>
</dbReference>
<dbReference type="InterPro" id="IPR010989">
    <property type="entry name" value="SNARE"/>
</dbReference>
<dbReference type="InterPro" id="IPR015260">
    <property type="entry name" value="Syntaxin-6/10/61_N"/>
</dbReference>
<dbReference type="InterPro" id="IPR006012">
    <property type="entry name" value="Syntaxin/epimorphin_CS"/>
</dbReference>
<dbReference type="InterPro" id="IPR000727">
    <property type="entry name" value="T_SNARE_dom"/>
</dbReference>
<dbReference type="PANTHER" id="PTHR12791">
    <property type="entry name" value="GOLGI SNARE BET1-RELATED"/>
    <property type="match status" value="1"/>
</dbReference>
<dbReference type="Pfam" id="PF05739">
    <property type="entry name" value="SNARE"/>
    <property type="match status" value="1"/>
</dbReference>
<dbReference type="Pfam" id="PF09177">
    <property type="entry name" value="STX6_10_61_N"/>
    <property type="match status" value="1"/>
</dbReference>
<dbReference type="SMART" id="SM00397">
    <property type="entry name" value="t_SNARE"/>
    <property type="match status" value="1"/>
</dbReference>
<dbReference type="SUPFAM" id="SSF58038">
    <property type="entry name" value="SNARE fusion complex"/>
    <property type="match status" value="1"/>
</dbReference>
<dbReference type="SUPFAM" id="SSF47661">
    <property type="entry name" value="t-snare proteins"/>
    <property type="match status" value="1"/>
</dbReference>
<dbReference type="PROSITE" id="PS00914">
    <property type="entry name" value="SYNTAXIN"/>
    <property type="match status" value="1"/>
</dbReference>
<dbReference type="PROSITE" id="PS50192">
    <property type="entry name" value="T_SNARE"/>
    <property type="match status" value="1"/>
</dbReference>
<proteinExistence type="evidence at protein level"/>
<gene>
    <name type="primary">STX10</name>
    <name type="synonym">SYN10</name>
</gene>
<protein>
    <recommendedName>
        <fullName>Syntaxin-10</fullName>
        <shortName>Syn10</shortName>
    </recommendedName>
</protein>